<keyword id="KW-0963">Cytoplasm</keyword>
<keyword id="KW-0269">Exonuclease</keyword>
<keyword id="KW-0378">Hydrolase</keyword>
<keyword id="KW-0540">Nuclease</keyword>
<keyword id="KW-1185">Reference proteome</keyword>
<name>ORN_IDILO</name>
<sequence length="183" mass="21105">MTEDNKKQRLIWIDLEMTGLEPDENHIIEVATIVTDAQLNTLAEGPVIAVHQPQKHLDRMDDWNVKTHTGSGLVERVKESQHDERKAAAETIEFLRQYIDAGVSPMCGNSICQDRRFLAKHMPELEAFFHYRNLDVSTLKELAKRWNPEVANSFKKSGAHEALADIRESIAELQHYREHFFSK</sequence>
<feature type="chain" id="PRO_0000111041" description="Oligoribonuclease">
    <location>
        <begin position="1"/>
        <end position="183"/>
    </location>
</feature>
<feature type="domain" description="Exonuclease" evidence="1">
    <location>
        <begin position="10"/>
        <end position="173"/>
    </location>
</feature>
<feature type="active site" evidence="1">
    <location>
        <position position="131"/>
    </location>
</feature>
<gene>
    <name evidence="1" type="primary">orn</name>
    <name type="ordered locus">IL2300</name>
</gene>
<organism>
    <name type="scientific">Idiomarina loihiensis (strain ATCC BAA-735 / DSM 15497 / L2-TR)</name>
    <dbReference type="NCBI Taxonomy" id="283942"/>
    <lineage>
        <taxon>Bacteria</taxon>
        <taxon>Pseudomonadati</taxon>
        <taxon>Pseudomonadota</taxon>
        <taxon>Gammaproteobacteria</taxon>
        <taxon>Alteromonadales</taxon>
        <taxon>Idiomarinaceae</taxon>
        <taxon>Idiomarina</taxon>
    </lineage>
</organism>
<evidence type="ECO:0000255" key="1">
    <source>
        <dbReference type="HAMAP-Rule" id="MF_00045"/>
    </source>
</evidence>
<protein>
    <recommendedName>
        <fullName evidence="1">Oligoribonuclease</fullName>
        <ecNumber evidence="1">3.1.15.-</ecNumber>
    </recommendedName>
</protein>
<proteinExistence type="inferred from homology"/>
<dbReference type="EC" id="3.1.15.-" evidence="1"/>
<dbReference type="EMBL" id="AE017340">
    <property type="protein sequence ID" value="AAV83132.1"/>
    <property type="molecule type" value="Genomic_DNA"/>
</dbReference>
<dbReference type="RefSeq" id="WP_011235526.1">
    <property type="nucleotide sequence ID" value="NC_006512.1"/>
</dbReference>
<dbReference type="SMR" id="Q5QVW2"/>
<dbReference type="STRING" id="283942.IL2300"/>
<dbReference type="GeneID" id="41337496"/>
<dbReference type="KEGG" id="ilo:IL2300"/>
<dbReference type="eggNOG" id="COG1949">
    <property type="taxonomic scope" value="Bacteria"/>
</dbReference>
<dbReference type="HOGENOM" id="CLU_064761_2_0_6"/>
<dbReference type="OrthoDB" id="9801329at2"/>
<dbReference type="Proteomes" id="UP000001171">
    <property type="component" value="Chromosome"/>
</dbReference>
<dbReference type="GO" id="GO:0005737">
    <property type="term" value="C:cytoplasm"/>
    <property type="evidence" value="ECO:0007669"/>
    <property type="project" value="UniProtKB-SubCell"/>
</dbReference>
<dbReference type="GO" id="GO:0000175">
    <property type="term" value="F:3'-5'-RNA exonuclease activity"/>
    <property type="evidence" value="ECO:0007669"/>
    <property type="project" value="InterPro"/>
</dbReference>
<dbReference type="GO" id="GO:0003676">
    <property type="term" value="F:nucleic acid binding"/>
    <property type="evidence" value="ECO:0007669"/>
    <property type="project" value="InterPro"/>
</dbReference>
<dbReference type="GO" id="GO:0006259">
    <property type="term" value="P:DNA metabolic process"/>
    <property type="evidence" value="ECO:0007669"/>
    <property type="project" value="UniProtKB-ARBA"/>
</dbReference>
<dbReference type="CDD" id="cd06135">
    <property type="entry name" value="Orn"/>
    <property type="match status" value="1"/>
</dbReference>
<dbReference type="FunFam" id="3.30.420.10:FF:000003">
    <property type="entry name" value="Oligoribonuclease"/>
    <property type="match status" value="1"/>
</dbReference>
<dbReference type="Gene3D" id="3.30.420.10">
    <property type="entry name" value="Ribonuclease H-like superfamily/Ribonuclease H"/>
    <property type="match status" value="1"/>
</dbReference>
<dbReference type="HAMAP" id="MF_00045">
    <property type="entry name" value="Oligoribonuclease"/>
    <property type="match status" value="1"/>
</dbReference>
<dbReference type="InterPro" id="IPR013520">
    <property type="entry name" value="Exonuclease_RNaseT/DNA_pol3"/>
</dbReference>
<dbReference type="InterPro" id="IPR022894">
    <property type="entry name" value="Oligoribonuclease"/>
</dbReference>
<dbReference type="InterPro" id="IPR012337">
    <property type="entry name" value="RNaseH-like_sf"/>
</dbReference>
<dbReference type="InterPro" id="IPR036397">
    <property type="entry name" value="RNaseH_sf"/>
</dbReference>
<dbReference type="NCBIfam" id="NF003765">
    <property type="entry name" value="PRK05359.1"/>
    <property type="match status" value="1"/>
</dbReference>
<dbReference type="PANTHER" id="PTHR11046">
    <property type="entry name" value="OLIGORIBONUCLEASE, MITOCHONDRIAL"/>
    <property type="match status" value="1"/>
</dbReference>
<dbReference type="PANTHER" id="PTHR11046:SF0">
    <property type="entry name" value="OLIGORIBONUCLEASE, MITOCHONDRIAL"/>
    <property type="match status" value="1"/>
</dbReference>
<dbReference type="Pfam" id="PF00929">
    <property type="entry name" value="RNase_T"/>
    <property type="match status" value="1"/>
</dbReference>
<dbReference type="SMART" id="SM00479">
    <property type="entry name" value="EXOIII"/>
    <property type="match status" value="1"/>
</dbReference>
<dbReference type="SUPFAM" id="SSF53098">
    <property type="entry name" value="Ribonuclease H-like"/>
    <property type="match status" value="1"/>
</dbReference>
<comment type="function">
    <text evidence="1">3'-to-5' exoribonuclease specific for small oligoribonucleotides.</text>
</comment>
<comment type="subcellular location">
    <subcellularLocation>
        <location evidence="1">Cytoplasm</location>
    </subcellularLocation>
</comment>
<comment type="similarity">
    <text evidence="1">Belongs to the oligoribonuclease family.</text>
</comment>
<accession>Q5QVW2</accession>
<reference key="1">
    <citation type="journal article" date="2004" name="Proc. Natl. Acad. Sci. U.S.A.">
        <title>Genome sequence of the deep-sea gamma-proteobacterium Idiomarina loihiensis reveals amino acid fermentation as a source of carbon and energy.</title>
        <authorList>
            <person name="Hou S."/>
            <person name="Saw J.H."/>
            <person name="Lee K.S."/>
            <person name="Freitas T.A."/>
            <person name="Belisle C."/>
            <person name="Kawarabayasi Y."/>
            <person name="Donachie S.P."/>
            <person name="Pikina A."/>
            <person name="Galperin M.Y."/>
            <person name="Koonin E.V."/>
            <person name="Makarova K.S."/>
            <person name="Omelchenko M.V."/>
            <person name="Sorokin A."/>
            <person name="Wolf Y.I."/>
            <person name="Li Q.X."/>
            <person name="Keum Y.S."/>
            <person name="Campbell S."/>
            <person name="Denery J."/>
            <person name="Aizawa S."/>
            <person name="Shibata S."/>
            <person name="Malahoff A."/>
            <person name="Alam M."/>
        </authorList>
    </citation>
    <scope>NUCLEOTIDE SEQUENCE [LARGE SCALE GENOMIC DNA]</scope>
    <source>
        <strain>ATCC BAA-735 / DSM 15497 / L2-TR</strain>
    </source>
</reference>